<dbReference type="EMBL" id="X17063">
    <property type="protein sequence ID" value="CAA34907.1"/>
    <property type="molecule type" value="Genomic_DNA"/>
</dbReference>
<dbReference type="EMBL" id="U30821">
    <property type="protein sequence ID" value="AAA81192.1"/>
    <property type="molecule type" value="Genomic_DNA"/>
</dbReference>
<dbReference type="PIR" id="S07070">
    <property type="entry name" value="R5KT35"/>
</dbReference>
<dbReference type="RefSeq" id="NP_043161.1">
    <property type="nucleotide sequence ID" value="NC_001675.1"/>
</dbReference>
<dbReference type="SMR" id="P14810"/>
<dbReference type="GeneID" id="801534"/>
<dbReference type="GO" id="GO:0009842">
    <property type="term" value="C:cyanelle"/>
    <property type="evidence" value="ECO:0007669"/>
    <property type="project" value="UniProtKB-SubCell"/>
</dbReference>
<dbReference type="GO" id="GO:0015934">
    <property type="term" value="C:large ribosomal subunit"/>
    <property type="evidence" value="ECO:0007669"/>
    <property type="project" value="TreeGrafter"/>
</dbReference>
<dbReference type="GO" id="GO:0003735">
    <property type="term" value="F:structural constituent of ribosome"/>
    <property type="evidence" value="ECO:0007669"/>
    <property type="project" value="InterPro"/>
</dbReference>
<dbReference type="GO" id="GO:0006412">
    <property type="term" value="P:translation"/>
    <property type="evidence" value="ECO:0007669"/>
    <property type="project" value="InterPro"/>
</dbReference>
<dbReference type="FunFam" id="4.10.410.60:FF:000001">
    <property type="entry name" value="50S ribosomal protein L35"/>
    <property type="match status" value="1"/>
</dbReference>
<dbReference type="Gene3D" id="4.10.410.60">
    <property type="match status" value="1"/>
</dbReference>
<dbReference type="HAMAP" id="MF_00514">
    <property type="entry name" value="Ribosomal_bL35"/>
    <property type="match status" value="1"/>
</dbReference>
<dbReference type="InterPro" id="IPR001706">
    <property type="entry name" value="Ribosomal_bL35"/>
</dbReference>
<dbReference type="InterPro" id="IPR021137">
    <property type="entry name" value="Ribosomal_bL35-like"/>
</dbReference>
<dbReference type="InterPro" id="IPR018265">
    <property type="entry name" value="Ribosomal_bL35_CS"/>
</dbReference>
<dbReference type="InterPro" id="IPR037229">
    <property type="entry name" value="Ribosomal_bL35_sf"/>
</dbReference>
<dbReference type="NCBIfam" id="TIGR00001">
    <property type="entry name" value="rpmI_bact"/>
    <property type="match status" value="1"/>
</dbReference>
<dbReference type="PANTHER" id="PTHR33343">
    <property type="entry name" value="54S RIBOSOMAL PROTEIN BL35M"/>
    <property type="match status" value="1"/>
</dbReference>
<dbReference type="PANTHER" id="PTHR33343:SF1">
    <property type="entry name" value="LARGE RIBOSOMAL SUBUNIT PROTEIN BL35M"/>
    <property type="match status" value="1"/>
</dbReference>
<dbReference type="Pfam" id="PF01632">
    <property type="entry name" value="Ribosomal_L35p"/>
    <property type="match status" value="1"/>
</dbReference>
<dbReference type="PRINTS" id="PR00064">
    <property type="entry name" value="RIBOSOMALL35"/>
</dbReference>
<dbReference type="SUPFAM" id="SSF143034">
    <property type="entry name" value="L35p-like"/>
    <property type="match status" value="1"/>
</dbReference>
<dbReference type="PROSITE" id="PS00936">
    <property type="entry name" value="RIBOSOMAL_L35"/>
    <property type="match status" value="1"/>
</dbReference>
<feature type="chain" id="PRO_0000177464" description="Large ribosomal subunit protein bL35c">
    <location>
        <begin position="1"/>
        <end position="65"/>
    </location>
</feature>
<protein>
    <recommendedName>
        <fullName evidence="1">Large ribosomal subunit protein bL35c</fullName>
    </recommendedName>
    <alternativeName>
        <fullName>50S ribosomal protein L35, cyanelle</fullName>
    </alternativeName>
</protein>
<reference key="1">
    <citation type="journal article" date="1990" name="FEBS Lett.">
        <title>The cyanelle genome of Cyanophora paradoxa encodes ribosomal proteins not encoded by the chloroplasts genomes of higher plants.</title>
        <authorList>
            <person name="Bryant D.A."/>
            <person name="Stirewalt V.L."/>
        </authorList>
    </citation>
    <scope>NUCLEOTIDE SEQUENCE [GENOMIC DNA]</scope>
    <source>
        <strain>UTEX LB 555 / Pringsheim</strain>
    </source>
</reference>
<reference key="2">
    <citation type="journal article" date="1995" name="Plant Mol. Biol. Rep.">
        <title>Nucleotide sequence of the cyanelle DNA from Cyanophora paradoxa.</title>
        <authorList>
            <person name="Stirewalt V.L."/>
            <person name="Michalowski C.B."/>
            <person name="Loeffelhardt W."/>
            <person name="Bohnert H.J."/>
            <person name="Bryant D.A."/>
        </authorList>
    </citation>
    <scope>NUCLEOTIDE SEQUENCE [LARGE SCALE GENOMIC DNA]</scope>
    <source>
        <strain>UTEX LB 555 / Pringsheim</strain>
    </source>
</reference>
<reference key="3">
    <citation type="book" date="1997" name="Eukaryotism and symbiosis">
        <title>The complete sequence of the cyanelle genome of Cyanophora paradoxa: the genetic complexity of a primitive plastid.</title>
        <editorList>
            <person name="Schenk H.E.A."/>
            <person name="Herrmann R."/>
            <person name="Jeon K.W."/>
            <person name="Mueller N.E."/>
            <person name="Schwemmler W."/>
        </editorList>
        <authorList>
            <person name="Loeffelhardt W."/>
            <person name="Stirewalt V.L."/>
            <person name="Michalowski C.B."/>
            <person name="Annarella M."/>
            <person name="Farley J.Y."/>
            <person name="Schluchter W.M."/>
            <person name="Chung S."/>
            <person name="Newmann-Spallart C."/>
            <person name="Steiner J.M."/>
            <person name="Jakowitsch J."/>
            <person name="Bohnert H.J."/>
            <person name="Bryant D.A."/>
        </authorList>
    </citation>
    <scope>NUCLEOTIDE SEQUENCE [LARGE SCALE GENOMIC DNA]</scope>
    <source>
        <strain>UTEX LB 555 / Pringsheim</strain>
    </source>
</reference>
<sequence>MYKLKTRKAAAKRYKAVGNKKISRRKAFRSHLLQKKSTNRKRQLSQVVIASPGDTKKIYLMLPYL</sequence>
<comment type="subcellular location">
    <subcellularLocation>
        <location>Plastid</location>
        <location>Cyanelle</location>
    </subcellularLocation>
</comment>
<comment type="similarity">
    <text evidence="1">Belongs to the bacterial ribosomal protein bL35 family.</text>
</comment>
<gene>
    <name type="primary">rpl35</name>
</gene>
<proteinExistence type="inferred from homology"/>
<organism>
    <name type="scientific">Cyanophora paradoxa</name>
    <dbReference type="NCBI Taxonomy" id="2762"/>
    <lineage>
        <taxon>Eukaryota</taxon>
        <taxon>Glaucocystophyceae</taxon>
        <taxon>Cyanophoraceae</taxon>
        <taxon>Cyanophora</taxon>
    </lineage>
</organism>
<geneLocation type="cyanelle"/>
<evidence type="ECO:0000305" key="1"/>
<accession>P14810</accession>
<name>RK35_CYAPA</name>
<keyword id="KW-0194">Cyanelle</keyword>
<keyword id="KW-0934">Plastid</keyword>
<keyword id="KW-0687">Ribonucleoprotein</keyword>
<keyword id="KW-0689">Ribosomal protein</keyword>